<sequence>MSIITDVYAREVLDSRGNPTLEVEVYTESGAFGRGMVPSGASTGEHEAVELRDGDKSRYGGLGTQKAVDNVNNIIAEAIIGYDVRDQQAIDRAMIALDGTPNKGKLGANAILGVSIAVARAAADYLEIPLYSYLGGFNTKVLPTPMMNIINGGSHSDAPIAFQEFMILPVGAPTFKEALRYGAEIFHALKKILKSRGLETAVGDEGGFAPRFEGTEDGVETILAAIEAAGYVPGKDVFLGFDCASSEFYDKERKVYDYTKFEGEGAAVRTSAEQIDYLEELVNKYPIITIEDGMDENDWDGWKALTERLGKKVQLVGDDFFVTNTDYLARGIQEGAANSILIKVNQIGTLTETFEAIEMAKEAGYTAVVSHRSGETEDSTIADIAVATNAGQIKTGSLSRTDRIAKYNQLLRIEDQLGEVAEYRGLKSFYNLKK</sequence>
<name>ENO_STRPS</name>
<feature type="chain" id="PRO_1000115921" description="Enolase">
    <location>
        <begin position="1"/>
        <end position="434"/>
    </location>
</feature>
<feature type="active site" description="Proton donor" evidence="1">
    <location>
        <position position="205"/>
    </location>
</feature>
<feature type="active site" description="Proton acceptor" evidence="1">
    <location>
        <position position="343"/>
    </location>
</feature>
<feature type="binding site" evidence="1">
    <location>
        <position position="163"/>
    </location>
    <ligand>
        <name>(2R)-2-phosphoglycerate</name>
        <dbReference type="ChEBI" id="CHEBI:58289"/>
    </ligand>
</feature>
<feature type="binding site" evidence="1">
    <location>
        <position position="242"/>
    </location>
    <ligand>
        <name>Mg(2+)</name>
        <dbReference type="ChEBI" id="CHEBI:18420"/>
    </ligand>
</feature>
<feature type="binding site" evidence="1">
    <location>
        <position position="291"/>
    </location>
    <ligand>
        <name>Mg(2+)</name>
        <dbReference type="ChEBI" id="CHEBI:18420"/>
    </ligand>
</feature>
<feature type="binding site" evidence="1">
    <location>
        <position position="318"/>
    </location>
    <ligand>
        <name>Mg(2+)</name>
        <dbReference type="ChEBI" id="CHEBI:18420"/>
    </ligand>
</feature>
<feature type="binding site" evidence="1">
    <location>
        <position position="343"/>
    </location>
    <ligand>
        <name>(2R)-2-phosphoglycerate</name>
        <dbReference type="ChEBI" id="CHEBI:58289"/>
    </ligand>
</feature>
<feature type="binding site" evidence="1">
    <location>
        <position position="372"/>
    </location>
    <ligand>
        <name>(2R)-2-phosphoglycerate</name>
        <dbReference type="ChEBI" id="CHEBI:58289"/>
    </ligand>
</feature>
<feature type="binding site" evidence="1">
    <location>
        <position position="373"/>
    </location>
    <ligand>
        <name>(2R)-2-phosphoglycerate</name>
        <dbReference type="ChEBI" id="CHEBI:58289"/>
    </ligand>
</feature>
<feature type="binding site" evidence="1">
    <location>
        <position position="394"/>
    </location>
    <ligand>
        <name>(2R)-2-phosphoglycerate</name>
        <dbReference type="ChEBI" id="CHEBI:58289"/>
    </ligand>
</feature>
<dbReference type="EC" id="4.2.1.11" evidence="1"/>
<dbReference type="EMBL" id="CP001033">
    <property type="protein sequence ID" value="ACB90402.1"/>
    <property type="molecule type" value="Genomic_DNA"/>
</dbReference>
<dbReference type="RefSeq" id="WP_000022815.1">
    <property type="nucleotide sequence ID" value="NC_010582.1"/>
</dbReference>
<dbReference type="SMR" id="B2IPX8"/>
<dbReference type="KEGG" id="spw:SPCG_1150"/>
<dbReference type="HOGENOM" id="CLU_031223_2_1_9"/>
<dbReference type="UniPathway" id="UPA00109">
    <property type="reaction ID" value="UER00187"/>
</dbReference>
<dbReference type="GO" id="GO:0009986">
    <property type="term" value="C:cell surface"/>
    <property type="evidence" value="ECO:0007669"/>
    <property type="project" value="UniProtKB-SubCell"/>
</dbReference>
<dbReference type="GO" id="GO:0005576">
    <property type="term" value="C:extracellular region"/>
    <property type="evidence" value="ECO:0007669"/>
    <property type="project" value="UniProtKB-SubCell"/>
</dbReference>
<dbReference type="GO" id="GO:0009274">
    <property type="term" value="C:peptidoglycan-based cell wall"/>
    <property type="evidence" value="ECO:0007669"/>
    <property type="project" value="UniProtKB-ARBA"/>
</dbReference>
<dbReference type="GO" id="GO:0000015">
    <property type="term" value="C:phosphopyruvate hydratase complex"/>
    <property type="evidence" value="ECO:0007669"/>
    <property type="project" value="InterPro"/>
</dbReference>
<dbReference type="GO" id="GO:0000287">
    <property type="term" value="F:magnesium ion binding"/>
    <property type="evidence" value="ECO:0007669"/>
    <property type="project" value="UniProtKB-UniRule"/>
</dbReference>
<dbReference type="GO" id="GO:0004634">
    <property type="term" value="F:phosphopyruvate hydratase activity"/>
    <property type="evidence" value="ECO:0007669"/>
    <property type="project" value="UniProtKB-UniRule"/>
</dbReference>
<dbReference type="GO" id="GO:0006096">
    <property type="term" value="P:glycolytic process"/>
    <property type="evidence" value="ECO:0007669"/>
    <property type="project" value="UniProtKB-UniRule"/>
</dbReference>
<dbReference type="CDD" id="cd03313">
    <property type="entry name" value="enolase"/>
    <property type="match status" value="1"/>
</dbReference>
<dbReference type="FunFam" id="3.20.20.120:FF:000001">
    <property type="entry name" value="Enolase"/>
    <property type="match status" value="1"/>
</dbReference>
<dbReference type="FunFam" id="3.30.390.10:FF:000001">
    <property type="entry name" value="Enolase"/>
    <property type="match status" value="1"/>
</dbReference>
<dbReference type="Gene3D" id="3.20.20.120">
    <property type="entry name" value="Enolase-like C-terminal domain"/>
    <property type="match status" value="1"/>
</dbReference>
<dbReference type="Gene3D" id="3.30.390.10">
    <property type="entry name" value="Enolase-like, N-terminal domain"/>
    <property type="match status" value="1"/>
</dbReference>
<dbReference type="HAMAP" id="MF_00318">
    <property type="entry name" value="Enolase"/>
    <property type="match status" value="1"/>
</dbReference>
<dbReference type="InterPro" id="IPR000941">
    <property type="entry name" value="Enolase"/>
</dbReference>
<dbReference type="InterPro" id="IPR036849">
    <property type="entry name" value="Enolase-like_C_sf"/>
</dbReference>
<dbReference type="InterPro" id="IPR029017">
    <property type="entry name" value="Enolase-like_N"/>
</dbReference>
<dbReference type="InterPro" id="IPR020810">
    <property type="entry name" value="Enolase_C"/>
</dbReference>
<dbReference type="InterPro" id="IPR020809">
    <property type="entry name" value="Enolase_CS"/>
</dbReference>
<dbReference type="InterPro" id="IPR020811">
    <property type="entry name" value="Enolase_N"/>
</dbReference>
<dbReference type="NCBIfam" id="TIGR01060">
    <property type="entry name" value="eno"/>
    <property type="match status" value="1"/>
</dbReference>
<dbReference type="PANTHER" id="PTHR11902">
    <property type="entry name" value="ENOLASE"/>
    <property type="match status" value="1"/>
</dbReference>
<dbReference type="PANTHER" id="PTHR11902:SF1">
    <property type="entry name" value="ENOLASE"/>
    <property type="match status" value="1"/>
</dbReference>
<dbReference type="Pfam" id="PF00113">
    <property type="entry name" value="Enolase_C"/>
    <property type="match status" value="1"/>
</dbReference>
<dbReference type="Pfam" id="PF03952">
    <property type="entry name" value="Enolase_N"/>
    <property type="match status" value="1"/>
</dbReference>
<dbReference type="PIRSF" id="PIRSF001400">
    <property type="entry name" value="Enolase"/>
    <property type="match status" value="1"/>
</dbReference>
<dbReference type="PRINTS" id="PR00148">
    <property type="entry name" value="ENOLASE"/>
</dbReference>
<dbReference type="SFLD" id="SFLDF00002">
    <property type="entry name" value="enolase"/>
    <property type="match status" value="1"/>
</dbReference>
<dbReference type="SFLD" id="SFLDG00178">
    <property type="entry name" value="enolase"/>
    <property type="match status" value="1"/>
</dbReference>
<dbReference type="SMART" id="SM01192">
    <property type="entry name" value="Enolase_C"/>
    <property type="match status" value="1"/>
</dbReference>
<dbReference type="SMART" id="SM01193">
    <property type="entry name" value="Enolase_N"/>
    <property type="match status" value="1"/>
</dbReference>
<dbReference type="SUPFAM" id="SSF51604">
    <property type="entry name" value="Enolase C-terminal domain-like"/>
    <property type="match status" value="1"/>
</dbReference>
<dbReference type="SUPFAM" id="SSF54826">
    <property type="entry name" value="Enolase N-terminal domain-like"/>
    <property type="match status" value="1"/>
</dbReference>
<dbReference type="PROSITE" id="PS00164">
    <property type="entry name" value="ENOLASE"/>
    <property type="match status" value="1"/>
</dbReference>
<keyword id="KW-0963">Cytoplasm</keyword>
<keyword id="KW-0324">Glycolysis</keyword>
<keyword id="KW-0456">Lyase</keyword>
<keyword id="KW-0460">Magnesium</keyword>
<keyword id="KW-0479">Metal-binding</keyword>
<keyword id="KW-0964">Secreted</keyword>
<gene>
    <name evidence="1" type="primary">eno</name>
    <name type="ordered locus">SPCG_1150</name>
</gene>
<proteinExistence type="inferred from homology"/>
<reference key="1">
    <citation type="journal article" date="2009" name="BMC Genomics">
        <title>Genome evolution driven by host adaptations results in a more virulent and antimicrobial-resistant Streptococcus pneumoniae serotype 14.</title>
        <authorList>
            <person name="Ding F."/>
            <person name="Tang P."/>
            <person name="Hsu M.-H."/>
            <person name="Cui P."/>
            <person name="Hu S."/>
            <person name="Yu J."/>
            <person name="Chiu C.-H."/>
        </authorList>
    </citation>
    <scope>NUCLEOTIDE SEQUENCE [LARGE SCALE GENOMIC DNA]</scope>
    <source>
        <strain>CGSP14</strain>
    </source>
</reference>
<protein>
    <recommendedName>
        <fullName evidence="1">Enolase</fullName>
        <ecNumber evidence="1">4.2.1.11</ecNumber>
    </recommendedName>
    <alternativeName>
        <fullName evidence="1">2-phospho-D-glycerate hydro-lyase</fullName>
    </alternativeName>
    <alternativeName>
        <fullName evidence="1">2-phosphoglycerate dehydratase</fullName>
    </alternativeName>
</protein>
<comment type="function">
    <text evidence="1">Catalyzes the reversible conversion of 2-phosphoglycerate (2-PG) into phosphoenolpyruvate (PEP). It is essential for the degradation of carbohydrates via glycolysis.</text>
</comment>
<comment type="catalytic activity">
    <reaction evidence="1">
        <text>(2R)-2-phosphoglycerate = phosphoenolpyruvate + H2O</text>
        <dbReference type="Rhea" id="RHEA:10164"/>
        <dbReference type="ChEBI" id="CHEBI:15377"/>
        <dbReference type="ChEBI" id="CHEBI:58289"/>
        <dbReference type="ChEBI" id="CHEBI:58702"/>
        <dbReference type="EC" id="4.2.1.11"/>
    </reaction>
</comment>
<comment type="cofactor">
    <cofactor evidence="1">
        <name>Mg(2+)</name>
        <dbReference type="ChEBI" id="CHEBI:18420"/>
    </cofactor>
    <text evidence="1">Binds a second Mg(2+) ion via substrate during catalysis.</text>
</comment>
<comment type="pathway">
    <text evidence="1">Carbohydrate degradation; glycolysis; pyruvate from D-glyceraldehyde 3-phosphate: step 4/5.</text>
</comment>
<comment type="subcellular location">
    <subcellularLocation>
        <location evidence="1">Cytoplasm</location>
    </subcellularLocation>
    <subcellularLocation>
        <location evidence="1">Secreted</location>
    </subcellularLocation>
    <subcellularLocation>
        <location evidence="1">Cell surface</location>
    </subcellularLocation>
    <text evidence="1">Fractions of enolase are present in both the cytoplasm and on the cell surface.</text>
</comment>
<comment type="similarity">
    <text evidence="1">Belongs to the enolase family.</text>
</comment>
<organism>
    <name type="scientific">Streptococcus pneumoniae (strain CGSP14)</name>
    <dbReference type="NCBI Taxonomy" id="516950"/>
    <lineage>
        <taxon>Bacteria</taxon>
        <taxon>Bacillati</taxon>
        <taxon>Bacillota</taxon>
        <taxon>Bacilli</taxon>
        <taxon>Lactobacillales</taxon>
        <taxon>Streptococcaceae</taxon>
        <taxon>Streptococcus</taxon>
    </lineage>
</organism>
<evidence type="ECO:0000255" key="1">
    <source>
        <dbReference type="HAMAP-Rule" id="MF_00318"/>
    </source>
</evidence>
<accession>B2IPX8</accession>